<proteinExistence type="evidence at transcript level"/>
<organism>
    <name type="scientific">Emericella nidulans (strain FGSC A4 / ATCC 38163 / CBS 112.46 / NRRL 194 / M139)</name>
    <name type="common">Aspergillus nidulans</name>
    <dbReference type="NCBI Taxonomy" id="227321"/>
    <lineage>
        <taxon>Eukaryota</taxon>
        <taxon>Fungi</taxon>
        <taxon>Dikarya</taxon>
        <taxon>Ascomycota</taxon>
        <taxon>Pezizomycotina</taxon>
        <taxon>Eurotiomycetes</taxon>
        <taxon>Eurotiomycetidae</taxon>
        <taxon>Eurotiales</taxon>
        <taxon>Aspergillaceae</taxon>
        <taxon>Aspergillus</taxon>
        <taxon>Aspergillus subgen. Nidulantes</taxon>
    </lineage>
</organism>
<keyword id="KW-0119">Carbohydrate metabolism</keyword>
<keyword id="KW-0961">Cell wall biogenesis/degradation</keyword>
<keyword id="KW-1015">Disulfide bond</keyword>
<keyword id="KW-0325">Glycoprotein</keyword>
<keyword id="KW-0456">Lyase</keyword>
<keyword id="KW-0624">Polysaccharide degradation</keyword>
<keyword id="KW-1185">Reference proteome</keyword>
<keyword id="KW-0964">Secreted</keyword>
<keyword id="KW-0732">Signal</keyword>
<reference key="1">
    <citation type="journal article" date="2006" name="Proc. Natl. Acad. Sci. U.S.A.">
        <title>Development and application of a suite of polysaccharide-degrading enzymes for analyzing plant cell walls.</title>
        <authorList>
            <person name="Bauer S."/>
            <person name="Vasu P."/>
            <person name="Persson S."/>
            <person name="Mort A.J."/>
            <person name="Somerville C.R."/>
        </authorList>
    </citation>
    <scope>NUCLEOTIDE SEQUENCE [MRNA]</scope>
    <scope>FUNCTION</scope>
    <source>
        <strain>FGSC A4 / ATCC 38163 / CBS 112.46 / NRRL 194 / M139</strain>
    </source>
</reference>
<reference key="2">
    <citation type="journal article" date="2005" name="Nature">
        <title>Sequencing of Aspergillus nidulans and comparative analysis with A. fumigatus and A. oryzae.</title>
        <authorList>
            <person name="Galagan J.E."/>
            <person name="Calvo S.E."/>
            <person name="Cuomo C."/>
            <person name="Ma L.-J."/>
            <person name="Wortman J.R."/>
            <person name="Batzoglou S."/>
            <person name="Lee S.-I."/>
            <person name="Bastuerkmen M."/>
            <person name="Spevak C.C."/>
            <person name="Clutterbuck J."/>
            <person name="Kapitonov V."/>
            <person name="Jurka J."/>
            <person name="Scazzocchio C."/>
            <person name="Farman M.L."/>
            <person name="Butler J."/>
            <person name="Purcell S."/>
            <person name="Harris S."/>
            <person name="Braus G.H."/>
            <person name="Draht O."/>
            <person name="Busch S."/>
            <person name="D'Enfert C."/>
            <person name="Bouchier C."/>
            <person name="Goldman G.H."/>
            <person name="Bell-Pedersen D."/>
            <person name="Griffiths-Jones S."/>
            <person name="Doonan J.H."/>
            <person name="Yu J."/>
            <person name="Vienken K."/>
            <person name="Pain A."/>
            <person name="Freitag M."/>
            <person name="Selker E.U."/>
            <person name="Archer D.B."/>
            <person name="Penalva M.A."/>
            <person name="Oakley B.R."/>
            <person name="Momany M."/>
            <person name="Tanaka T."/>
            <person name="Kumagai T."/>
            <person name="Asai K."/>
            <person name="Machida M."/>
            <person name="Nierman W.C."/>
            <person name="Denning D.W."/>
            <person name="Caddick M.X."/>
            <person name="Hynes M."/>
            <person name="Paoletti M."/>
            <person name="Fischer R."/>
            <person name="Miller B.L."/>
            <person name="Dyer P.S."/>
            <person name="Sachs M.S."/>
            <person name="Osmani S.A."/>
            <person name="Birren B.W."/>
        </authorList>
    </citation>
    <scope>NUCLEOTIDE SEQUENCE [LARGE SCALE GENOMIC DNA]</scope>
    <source>
        <strain>FGSC A4 / ATCC 38163 / CBS 112.46 / NRRL 194 / M139</strain>
    </source>
</reference>
<reference key="3">
    <citation type="journal article" date="2009" name="Fungal Genet. Biol.">
        <title>The 2008 update of the Aspergillus nidulans genome annotation: a community effort.</title>
        <authorList>
            <person name="Wortman J.R."/>
            <person name="Gilsenan J.M."/>
            <person name="Joardar V."/>
            <person name="Deegan J."/>
            <person name="Clutterbuck J."/>
            <person name="Andersen M.R."/>
            <person name="Archer D."/>
            <person name="Bencina M."/>
            <person name="Braus G."/>
            <person name="Coutinho P."/>
            <person name="von Dohren H."/>
            <person name="Doonan J."/>
            <person name="Driessen A.J."/>
            <person name="Durek P."/>
            <person name="Espeso E."/>
            <person name="Fekete E."/>
            <person name="Flipphi M."/>
            <person name="Estrada C.G."/>
            <person name="Geysens S."/>
            <person name="Goldman G."/>
            <person name="de Groot P.W."/>
            <person name="Hansen K."/>
            <person name="Harris S.D."/>
            <person name="Heinekamp T."/>
            <person name="Helmstaedt K."/>
            <person name="Henrissat B."/>
            <person name="Hofmann G."/>
            <person name="Homan T."/>
            <person name="Horio T."/>
            <person name="Horiuchi H."/>
            <person name="James S."/>
            <person name="Jones M."/>
            <person name="Karaffa L."/>
            <person name="Karanyi Z."/>
            <person name="Kato M."/>
            <person name="Keller N."/>
            <person name="Kelly D.E."/>
            <person name="Kiel J.A."/>
            <person name="Kim J.M."/>
            <person name="van der Klei I.J."/>
            <person name="Klis F.M."/>
            <person name="Kovalchuk A."/>
            <person name="Krasevec N."/>
            <person name="Kubicek C.P."/>
            <person name="Liu B."/>
            <person name="Maccabe A."/>
            <person name="Meyer V."/>
            <person name="Mirabito P."/>
            <person name="Miskei M."/>
            <person name="Mos M."/>
            <person name="Mullins J."/>
            <person name="Nelson D.R."/>
            <person name="Nielsen J."/>
            <person name="Oakley B.R."/>
            <person name="Osmani S.A."/>
            <person name="Pakula T."/>
            <person name="Paszewski A."/>
            <person name="Paulsen I."/>
            <person name="Pilsyk S."/>
            <person name="Pocsi I."/>
            <person name="Punt P.J."/>
            <person name="Ram A.F."/>
            <person name="Ren Q."/>
            <person name="Robellet X."/>
            <person name="Robson G."/>
            <person name="Seiboth B."/>
            <person name="van Solingen P."/>
            <person name="Specht T."/>
            <person name="Sun J."/>
            <person name="Taheri-Talesh N."/>
            <person name="Takeshita N."/>
            <person name="Ussery D."/>
            <person name="vanKuyk P.A."/>
            <person name="Visser H."/>
            <person name="van de Vondervoort P.J."/>
            <person name="de Vries R.P."/>
            <person name="Walton J."/>
            <person name="Xiang X."/>
            <person name="Xiong Y."/>
            <person name="Zeng A.P."/>
            <person name="Brandt B.W."/>
            <person name="Cornell M.J."/>
            <person name="van den Hondel C.A."/>
            <person name="Visser J."/>
            <person name="Oliver S.G."/>
            <person name="Turner G."/>
        </authorList>
    </citation>
    <scope>GENOME REANNOTATION</scope>
    <source>
        <strain>FGSC A4 / ATCC 38163 / CBS 112.46 / NRRL 194 / M139</strain>
    </source>
</reference>
<feature type="signal peptide" evidence="2">
    <location>
        <begin position="1"/>
        <end position="20"/>
    </location>
</feature>
<feature type="chain" id="PRO_0000394371" description="Rhamnogalacturonate lyase A">
    <location>
        <begin position="21"/>
        <end position="527"/>
    </location>
</feature>
<feature type="glycosylation site" description="N-linked (GlcNAc...) asparagine" evidence="2">
    <location>
        <position position="27"/>
    </location>
</feature>
<feature type="glycosylation site" description="N-linked (GlcNAc...) asparagine" evidence="2">
    <location>
        <position position="46"/>
    </location>
</feature>
<feature type="glycosylation site" description="N-linked (GlcNAc...) asparagine" evidence="2">
    <location>
        <position position="351"/>
    </location>
</feature>
<feature type="disulfide bond" evidence="1">
    <location>
        <begin position="50"/>
        <end position="93"/>
    </location>
</feature>
<feature type="disulfide bond" evidence="1">
    <location>
        <begin position="184"/>
        <end position="193"/>
    </location>
</feature>
<sequence length="527" mass="56381">MLSKTFLLSSAVLWARVANAAFGITDNGSSYTIDANSPNPLKFTVNKSSCDITSIVYYGSEFQYSGKGSHIGSGLGSATVSATQSGDYIKVTCDTSSLTHYFVVHNGDPIIHMATYITAEPDIGELRFIARLNSNLLPNEEPFGDVSTTSGGSAIEGSDVFLVNGETRSKFYSSERFIDDHRHCISGSAHRVCMILNQYESSSGGPFFRDINSNNGGDYNALYWYMNSGHVQTESFRTGLHGPYSMYFSRSGTPSTNIDTSFFASLGIKGYVAANGRGTVTGKASGADSSMDWVVHWYNNDAQYWTYTASDGSFTSPAMKPGTYTMKYYQGEFPVAETTVTVSAGSSTTKNISGSVKTGTTIFKIGEWDGQPTGFRNADKQLRMHPSDSRMDSWSSTYTVGSSSLSDFPMAVFKSVNNPVTIKFTATSAQTGAATLRIGTTLSFAGGRPQATINSYTGPAPSAPTNLNSRGVTRGAYRGLGEVYDVSVPAGTIVTGENTITISVISGSSGDAFLSPNVVFDCIELFQ</sequence>
<protein>
    <recommendedName>
        <fullName>Rhamnogalacturonate lyase A</fullName>
        <ecNumber>4.2.2.23</ecNumber>
    </recommendedName>
</protein>
<evidence type="ECO:0000250" key="1"/>
<evidence type="ECO:0000255" key="2"/>
<evidence type="ECO:0000269" key="3">
    <source>
    </source>
</evidence>
<evidence type="ECO:0000305" key="4"/>
<name>RGLA_EMENI</name>
<dbReference type="EC" id="4.2.2.23"/>
<dbReference type="EMBL" id="DQ490504">
    <property type="protein sequence ID" value="ABF50880.1"/>
    <property type="molecule type" value="mRNA"/>
</dbReference>
<dbReference type="EMBL" id="AACD01000122">
    <property type="protein sequence ID" value="EAA61387.1"/>
    <property type="molecule type" value="Genomic_DNA"/>
</dbReference>
<dbReference type="EMBL" id="BN001304">
    <property type="protein sequence ID" value="CBF79004.1"/>
    <property type="molecule type" value="Genomic_DNA"/>
</dbReference>
<dbReference type="RefSeq" id="XP_664739.1">
    <property type="nucleotide sequence ID" value="XM_659647.1"/>
</dbReference>
<dbReference type="SMR" id="Q5AX45"/>
<dbReference type="STRING" id="227321.Q5AX45"/>
<dbReference type="CAZy" id="PL4">
    <property type="family name" value="Polysaccharide Lyase Family 4"/>
</dbReference>
<dbReference type="GlyCosmos" id="Q5AX45">
    <property type="glycosylation" value="3 sites, No reported glycans"/>
</dbReference>
<dbReference type="EnsemblFungi" id="CBF79004">
    <property type="protein sequence ID" value="CBF79004"/>
    <property type="gene ID" value="ANIA_07135"/>
</dbReference>
<dbReference type="KEGG" id="ani:ANIA_07135"/>
<dbReference type="VEuPathDB" id="FungiDB:AN7135"/>
<dbReference type="eggNOG" id="ENOG502QTKY">
    <property type="taxonomic scope" value="Eukaryota"/>
</dbReference>
<dbReference type="HOGENOM" id="CLU_037882_1_1_1"/>
<dbReference type="InParanoid" id="Q5AX45"/>
<dbReference type="OMA" id="FKIGDWD"/>
<dbReference type="OrthoDB" id="114708at2759"/>
<dbReference type="Proteomes" id="UP000000560">
    <property type="component" value="Chromosome IV"/>
</dbReference>
<dbReference type="GO" id="GO:0005576">
    <property type="term" value="C:extracellular region"/>
    <property type="evidence" value="ECO:0007669"/>
    <property type="project" value="UniProtKB-SubCell"/>
</dbReference>
<dbReference type="GO" id="GO:0030246">
    <property type="term" value="F:carbohydrate binding"/>
    <property type="evidence" value="ECO:0007669"/>
    <property type="project" value="InterPro"/>
</dbReference>
<dbReference type="GO" id="GO:0016837">
    <property type="term" value="F:carbon-oxygen lyase activity, acting on polysaccharides"/>
    <property type="evidence" value="ECO:0000314"/>
    <property type="project" value="UniProtKB"/>
</dbReference>
<dbReference type="GO" id="GO:0102210">
    <property type="term" value="F:rhamnogalacturonan endolyase activity"/>
    <property type="evidence" value="ECO:0007669"/>
    <property type="project" value="UniProtKB-EC"/>
</dbReference>
<dbReference type="GO" id="GO:0071555">
    <property type="term" value="P:cell wall organization"/>
    <property type="evidence" value="ECO:0007669"/>
    <property type="project" value="UniProtKB-KW"/>
</dbReference>
<dbReference type="GO" id="GO:0045490">
    <property type="term" value="P:pectin catabolic process"/>
    <property type="evidence" value="ECO:0000314"/>
    <property type="project" value="UniProtKB"/>
</dbReference>
<dbReference type="CDD" id="cd10317">
    <property type="entry name" value="RGL4_C"/>
    <property type="match status" value="1"/>
</dbReference>
<dbReference type="CDD" id="cd10316">
    <property type="entry name" value="RGL4_M"/>
    <property type="match status" value="1"/>
</dbReference>
<dbReference type="CDD" id="cd10320">
    <property type="entry name" value="RGL4_N"/>
    <property type="match status" value="1"/>
</dbReference>
<dbReference type="FunFam" id="2.60.120.260:FF:000102">
    <property type="entry name" value="Rhamnogalacturonate lyase A"/>
    <property type="match status" value="1"/>
</dbReference>
<dbReference type="FunFam" id="2.60.40.1120:FF:000017">
    <property type="entry name" value="Rhamnogalacturonate lyase A"/>
    <property type="match status" value="1"/>
</dbReference>
<dbReference type="FunFam" id="2.70.98.10:FF:000020">
    <property type="entry name" value="Rhamnogalacturonate lyase A"/>
    <property type="match status" value="1"/>
</dbReference>
<dbReference type="Gene3D" id="2.70.98.10">
    <property type="match status" value="1"/>
</dbReference>
<dbReference type="Gene3D" id="2.60.40.1120">
    <property type="entry name" value="Carboxypeptidase-like, regulatory domain"/>
    <property type="match status" value="1"/>
</dbReference>
<dbReference type="Gene3D" id="2.60.120.260">
    <property type="entry name" value="Galactose-binding domain-like"/>
    <property type="match status" value="1"/>
</dbReference>
<dbReference type="InterPro" id="IPR013784">
    <property type="entry name" value="Carb-bd-like_fold"/>
</dbReference>
<dbReference type="InterPro" id="IPR011013">
    <property type="entry name" value="Gal_mutarotase_sf_dom"/>
</dbReference>
<dbReference type="InterPro" id="IPR008979">
    <property type="entry name" value="Galactose-bd-like_sf"/>
</dbReference>
<dbReference type="InterPro" id="IPR014718">
    <property type="entry name" value="GH-type_carb-bd"/>
</dbReference>
<dbReference type="InterPro" id="IPR029413">
    <property type="entry name" value="RG-lyase_II"/>
</dbReference>
<dbReference type="InterPro" id="IPR029411">
    <property type="entry name" value="RG-lyase_III"/>
</dbReference>
<dbReference type="InterPro" id="IPR016590">
    <property type="entry name" value="Rhamnogalacturonase_B"/>
</dbReference>
<dbReference type="InterPro" id="IPR015364">
    <property type="entry name" value="RhgB_N"/>
</dbReference>
<dbReference type="PANTHER" id="PTHR36574">
    <property type="entry name" value="RHAMNOGALACTURONATE LYASE-RELATED"/>
    <property type="match status" value="1"/>
</dbReference>
<dbReference type="PANTHER" id="PTHR36574:SF1">
    <property type="entry name" value="RHAMNOGALACTURONATE LYASE-RELATED"/>
    <property type="match status" value="1"/>
</dbReference>
<dbReference type="Pfam" id="PF14683">
    <property type="entry name" value="CBM-like"/>
    <property type="match status" value="1"/>
</dbReference>
<dbReference type="Pfam" id="PF14686">
    <property type="entry name" value="fn3_3"/>
    <property type="match status" value="1"/>
</dbReference>
<dbReference type="Pfam" id="PF09284">
    <property type="entry name" value="RhgB_N"/>
    <property type="match status" value="1"/>
</dbReference>
<dbReference type="PIRSF" id="PIRSF011794">
    <property type="entry name" value="Rhamnogalacturonase_B"/>
    <property type="match status" value="1"/>
</dbReference>
<dbReference type="SUPFAM" id="SSF74650">
    <property type="entry name" value="Galactose mutarotase-like"/>
    <property type="match status" value="1"/>
</dbReference>
<dbReference type="SUPFAM" id="SSF49785">
    <property type="entry name" value="Galactose-binding domain-like"/>
    <property type="match status" value="1"/>
</dbReference>
<dbReference type="SUPFAM" id="SSF49452">
    <property type="entry name" value="Starch-binding domain-like"/>
    <property type="match status" value="1"/>
</dbReference>
<accession>Q5AX45</accession>
<accession>C8VD91</accession>
<accession>Q1HFS0</accession>
<comment type="function">
    <text evidence="3">Pectinolytic enzymes consist of four classes of enzymes: pectin lyase, polygalacturonase, pectin methylesterase and rhamnogalacturonase. Degrades the rhamnogalacturonan I (RG-I) backbone of pectin. Active against linseed rhamnogalacturonan.</text>
</comment>
<comment type="catalytic activity">
    <reaction>
        <text>Endotype eliminative cleavage of L-alpha-rhamnopyranosyl-(1-&gt;4)-alpha-D-galactopyranosyluronic acid bonds of rhamnogalacturonan I domains in ramified hairy regions of pectin leaving L-rhamnopyranose at the reducing end and 4-deoxy-4,5-unsaturated D-galactopyranosyluronic acid at the non-reducing end.</text>
        <dbReference type="EC" id="4.2.2.23"/>
    </reaction>
</comment>
<comment type="subcellular location">
    <subcellularLocation>
        <location evidence="1">Secreted</location>
    </subcellularLocation>
</comment>
<comment type="similarity">
    <text evidence="4">Belongs to the polysaccharide lyase 4 family.</text>
</comment>
<gene>
    <name type="primary">rglA</name>
    <name type="ORF">AN7135</name>
</gene>